<dbReference type="EC" id="2.3.1.274" evidence="1"/>
<dbReference type="EMBL" id="AE004969">
    <property type="protein sequence ID" value="AAW90764.1"/>
    <property type="molecule type" value="Genomic_DNA"/>
</dbReference>
<dbReference type="RefSeq" id="WP_010951419.1">
    <property type="nucleotide sequence ID" value="NC_002946.2"/>
</dbReference>
<dbReference type="RefSeq" id="YP_209176.1">
    <property type="nucleotide sequence ID" value="NC_002946.2"/>
</dbReference>
<dbReference type="SMR" id="Q5F4X3"/>
<dbReference type="STRING" id="242231.NGO_2171"/>
<dbReference type="KEGG" id="ngo:NGO_2171"/>
<dbReference type="PATRIC" id="fig|242231.10.peg.2624"/>
<dbReference type="HOGENOM" id="CLU_039379_1_0_4"/>
<dbReference type="UniPathway" id="UPA00085"/>
<dbReference type="Proteomes" id="UP000000535">
    <property type="component" value="Chromosome"/>
</dbReference>
<dbReference type="GO" id="GO:0005737">
    <property type="term" value="C:cytoplasm"/>
    <property type="evidence" value="ECO:0007669"/>
    <property type="project" value="UniProtKB-SubCell"/>
</dbReference>
<dbReference type="GO" id="GO:0043811">
    <property type="term" value="F:phosphate:acyl-[acyl carrier protein] acyltransferase activity"/>
    <property type="evidence" value="ECO:0007669"/>
    <property type="project" value="UniProtKB-UniRule"/>
</dbReference>
<dbReference type="GO" id="GO:0006633">
    <property type="term" value="P:fatty acid biosynthetic process"/>
    <property type="evidence" value="ECO:0007669"/>
    <property type="project" value="UniProtKB-UniRule"/>
</dbReference>
<dbReference type="GO" id="GO:0008654">
    <property type="term" value="P:phospholipid biosynthetic process"/>
    <property type="evidence" value="ECO:0007669"/>
    <property type="project" value="UniProtKB-KW"/>
</dbReference>
<dbReference type="Gene3D" id="3.40.718.10">
    <property type="entry name" value="Isopropylmalate Dehydrogenase"/>
    <property type="match status" value="1"/>
</dbReference>
<dbReference type="HAMAP" id="MF_00019">
    <property type="entry name" value="PlsX"/>
    <property type="match status" value="1"/>
</dbReference>
<dbReference type="InterPro" id="IPR003664">
    <property type="entry name" value="FA_synthesis"/>
</dbReference>
<dbReference type="InterPro" id="IPR012281">
    <property type="entry name" value="Phospholipid_synth_PlsX-like"/>
</dbReference>
<dbReference type="NCBIfam" id="TIGR00182">
    <property type="entry name" value="plsX"/>
    <property type="match status" value="1"/>
</dbReference>
<dbReference type="PANTHER" id="PTHR30100">
    <property type="entry name" value="FATTY ACID/PHOSPHOLIPID SYNTHESIS PROTEIN PLSX"/>
    <property type="match status" value="1"/>
</dbReference>
<dbReference type="PANTHER" id="PTHR30100:SF1">
    <property type="entry name" value="PHOSPHATE ACYLTRANSFERASE"/>
    <property type="match status" value="1"/>
</dbReference>
<dbReference type="Pfam" id="PF02504">
    <property type="entry name" value="FA_synthesis"/>
    <property type="match status" value="1"/>
</dbReference>
<dbReference type="PIRSF" id="PIRSF002465">
    <property type="entry name" value="Phsphlp_syn_PlsX"/>
    <property type="match status" value="1"/>
</dbReference>
<dbReference type="SUPFAM" id="SSF53659">
    <property type="entry name" value="Isocitrate/Isopropylmalate dehydrogenase-like"/>
    <property type="match status" value="1"/>
</dbReference>
<accession>Q5F4X3</accession>
<feature type="chain" id="PRO_1000001790" description="Phosphate acyltransferase">
    <location>
        <begin position="1"/>
        <end position="348"/>
    </location>
</feature>
<evidence type="ECO:0000255" key="1">
    <source>
        <dbReference type="HAMAP-Rule" id="MF_00019"/>
    </source>
</evidence>
<keyword id="KW-0963">Cytoplasm</keyword>
<keyword id="KW-0444">Lipid biosynthesis</keyword>
<keyword id="KW-0443">Lipid metabolism</keyword>
<keyword id="KW-0594">Phospholipid biosynthesis</keyword>
<keyword id="KW-1208">Phospholipid metabolism</keyword>
<keyword id="KW-1185">Reference proteome</keyword>
<keyword id="KW-0808">Transferase</keyword>
<organism>
    <name type="scientific">Neisseria gonorrhoeae (strain ATCC 700825 / FA 1090)</name>
    <dbReference type="NCBI Taxonomy" id="242231"/>
    <lineage>
        <taxon>Bacteria</taxon>
        <taxon>Pseudomonadati</taxon>
        <taxon>Pseudomonadota</taxon>
        <taxon>Betaproteobacteria</taxon>
        <taxon>Neisseriales</taxon>
        <taxon>Neisseriaceae</taxon>
        <taxon>Neisseria</taxon>
    </lineage>
</organism>
<name>PLSX_NEIG1</name>
<sequence>MITLAVESMGGDQGLAVTVPGATAFLQAHPDVRLIMTGDETQLRQALNAAGAPMERIDICHTTQVVGMDESPQSALKNKKYSSMRVAINQVKEGKAQAAVSAGNTGALMATARFVLKTIPGIERPAIAKFLPSDTDHVTLALDLGANVDCTPEQLAQFAVIGSELVHALHPQKGQPRVGLVNVGTEDIKGTDTVKQTYKLLQNSKLNFIGNIESNGILYGEADVVVADGFVGNVMLKTIEGAVKFMSGAIRREFQSNLFNKLAAVAALPALKGLKNKLDPRKFNGAILLGLRGIVIKSHGGTDKTGFRYALEEAYHEAKSAGLSKIEQGVAEQLAALEAAQNETAASL</sequence>
<reference key="1">
    <citation type="submission" date="2003-03" db="EMBL/GenBank/DDBJ databases">
        <title>The complete genome sequence of Neisseria gonorrhoeae.</title>
        <authorList>
            <person name="Lewis L.A."/>
            <person name="Gillaspy A.F."/>
            <person name="McLaughlin R.E."/>
            <person name="Gipson M."/>
            <person name="Ducey T.F."/>
            <person name="Ownbey T."/>
            <person name="Hartman K."/>
            <person name="Nydick C."/>
            <person name="Carson M.B."/>
            <person name="Vaughn J."/>
            <person name="Thomson C."/>
            <person name="Song L."/>
            <person name="Lin S."/>
            <person name="Yuan X."/>
            <person name="Najar F."/>
            <person name="Zhan M."/>
            <person name="Ren Q."/>
            <person name="Zhu H."/>
            <person name="Qi S."/>
            <person name="Kenton S.M."/>
            <person name="Lai H."/>
            <person name="White J.D."/>
            <person name="Clifton S."/>
            <person name="Roe B.A."/>
            <person name="Dyer D.W."/>
        </authorList>
    </citation>
    <scope>NUCLEOTIDE SEQUENCE [LARGE SCALE GENOMIC DNA]</scope>
    <source>
        <strain>ATCC 700825 / FA 1090</strain>
    </source>
</reference>
<protein>
    <recommendedName>
        <fullName evidence="1">Phosphate acyltransferase</fullName>
        <ecNumber evidence="1">2.3.1.274</ecNumber>
    </recommendedName>
    <alternativeName>
        <fullName evidence="1">Acyl-ACP phosphotransacylase</fullName>
    </alternativeName>
    <alternativeName>
        <fullName evidence="1">Acyl-[acyl-carrier-protein]--phosphate acyltransferase</fullName>
    </alternativeName>
    <alternativeName>
        <fullName evidence="1">Phosphate-acyl-ACP acyltransferase</fullName>
    </alternativeName>
</protein>
<comment type="function">
    <text evidence="1">Catalyzes the reversible formation of acyl-phosphate (acyl-PO(4)) from acyl-[acyl-carrier-protein] (acyl-ACP). This enzyme utilizes acyl-ACP as fatty acyl donor, but not acyl-CoA.</text>
</comment>
<comment type="catalytic activity">
    <reaction evidence="1">
        <text>a fatty acyl-[ACP] + phosphate = an acyl phosphate + holo-[ACP]</text>
        <dbReference type="Rhea" id="RHEA:42292"/>
        <dbReference type="Rhea" id="RHEA-COMP:9685"/>
        <dbReference type="Rhea" id="RHEA-COMP:14125"/>
        <dbReference type="ChEBI" id="CHEBI:43474"/>
        <dbReference type="ChEBI" id="CHEBI:59918"/>
        <dbReference type="ChEBI" id="CHEBI:64479"/>
        <dbReference type="ChEBI" id="CHEBI:138651"/>
        <dbReference type="EC" id="2.3.1.274"/>
    </reaction>
</comment>
<comment type="pathway">
    <text evidence="1">Lipid metabolism; phospholipid metabolism.</text>
</comment>
<comment type="subunit">
    <text evidence="1">Homodimer. Probably interacts with PlsY.</text>
</comment>
<comment type="subcellular location">
    <subcellularLocation>
        <location evidence="1">Cytoplasm</location>
    </subcellularLocation>
    <text evidence="1">Associated with the membrane possibly through PlsY.</text>
</comment>
<comment type="similarity">
    <text evidence="1">Belongs to the PlsX family.</text>
</comment>
<proteinExistence type="inferred from homology"/>
<gene>
    <name evidence="1" type="primary">plsX</name>
    <name type="ordered locus">NGO_2171</name>
</gene>